<dbReference type="EC" id="6.3.5.-" evidence="1"/>
<dbReference type="EMBL" id="CP001635">
    <property type="protein sequence ID" value="ACS16943.1"/>
    <property type="molecule type" value="Genomic_DNA"/>
</dbReference>
<dbReference type="SMR" id="C5CY39"/>
<dbReference type="STRING" id="543728.Vapar_0280"/>
<dbReference type="KEGG" id="vap:Vapar_0280"/>
<dbReference type="eggNOG" id="COG0064">
    <property type="taxonomic scope" value="Bacteria"/>
</dbReference>
<dbReference type="HOGENOM" id="CLU_019240_0_0_4"/>
<dbReference type="GO" id="GO:0050566">
    <property type="term" value="F:asparaginyl-tRNA synthase (glutamine-hydrolyzing) activity"/>
    <property type="evidence" value="ECO:0007669"/>
    <property type="project" value="RHEA"/>
</dbReference>
<dbReference type="GO" id="GO:0005524">
    <property type="term" value="F:ATP binding"/>
    <property type="evidence" value="ECO:0007669"/>
    <property type="project" value="UniProtKB-KW"/>
</dbReference>
<dbReference type="GO" id="GO:0050567">
    <property type="term" value="F:glutaminyl-tRNA synthase (glutamine-hydrolyzing) activity"/>
    <property type="evidence" value="ECO:0007669"/>
    <property type="project" value="UniProtKB-UniRule"/>
</dbReference>
<dbReference type="GO" id="GO:0070681">
    <property type="term" value="P:glutaminyl-tRNAGln biosynthesis via transamidation"/>
    <property type="evidence" value="ECO:0007669"/>
    <property type="project" value="TreeGrafter"/>
</dbReference>
<dbReference type="GO" id="GO:0006412">
    <property type="term" value="P:translation"/>
    <property type="evidence" value="ECO:0007669"/>
    <property type="project" value="UniProtKB-UniRule"/>
</dbReference>
<dbReference type="FunFam" id="1.10.10.410:FF:000001">
    <property type="entry name" value="Aspartyl/glutamyl-tRNA(Asn/Gln) amidotransferase subunit B"/>
    <property type="match status" value="1"/>
</dbReference>
<dbReference type="FunFam" id="1.10.150.380:FF:000001">
    <property type="entry name" value="Aspartyl/glutamyl-tRNA(Asn/Gln) amidotransferase subunit B"/>
    <property type="match status" value="1"/>
</dbReference>
<dbReference type="Gene3D" id="1.10.10.410">
    <property type="match status" value="1"/>
</dbReference>
<dbReference type="Gene3D" id="1.10.150.380">
    <property type="entry name" value="GatB domain, N-terminal subdomain"/>
    <property type="match status" value="1"/>
</dbReference>
<dbReference type="HAMAP" id="MF_00121">
    <property type="entry name" value="GatB"/>
    <property type="match status" value="1"/>
</dbReference>
<dbReference type="InterPro" id="IPR017959">
    <property type="entry name" value="Asn/Gln-tRNA_amidoTrfase_suB/E"/>
</dbReference>
<dbReference type="InterPro" id="IPR006075">
    <property type="entry name" value="Asn/Gln-tRNA_Trfase_suB/E_cat"/>
</dbReference>
<dbReference type="InterPro" id="IPR018027">
    <property type="entry name" value="Asn/Gln_amidotransferase"/>
</dbReference>
<dbReference type="InterPro" id="IPR003789">
    <property type="entry name" value="Asn/Gln_tRNA_amidoTrase-B-like"/>
</dbReference>
<dbReference type="InterPro" id="IPR004413">
    <property type="entry name" value="GatB"/>
</dbReference>
<dbReference type="InterPro" id="IPR042114">
    <property type="entry name" value="GatB_C_1"/>
</dbReference>
<dbReference type="InterPro" id="IPR023168">
    <property type="entry name" value="GatB_Yqey_C_2"/>
</dbReference>
<dbReference type="InterPro" id="IPR017958">
    <property type="entry name" value="Gln-tRNA_amidoTrfase_suB_CS"/>
</dbReference>
<dbReference type="InterPro" id="IPR014746">
    <property type="entry name" value="Gln_synth/guanido_kin_cat_dom"/>
</dbReference>
<dbReference type="NCBIfam" id="TIGR00133">
    <property type="entry name" value="gatB"/>
    <property type="match status" value="1"/>
</dbReference>
<dbReference type="NCBIfam" id="NF004012">
    <property type="entry name" value="PRK05477.1-2"/>
    <property type="match status" value="1"/>
</dbReference>
<dbReference type="NCBIfam" id="NF004014">
    <property type="entry name" value="PRK05477.1-4"/>
    <property type="match status" value="1"/>
</dbReference>
<dbReference type="PANTHER" id="PTHR11659">
    <property type="entry name" value="GLUTAMYL-TRNA GLN AMIDOTRANSFERASE SUBUNIT B MITOCHONDRIAL AND PROKARYOTIC PET112-RELATED"/>
    <property type="match status" value="1"/>
</dbReference>
<dbReference type="PANTHER" id="PTHR11659:SF0">
    <property type="entry name" value="GLUTAMYL-TRNA(GLN) AMIDOTRANSFERASE SUBUNIT B, MITOCHONDRIAL"/>
    <property type="match status" value="1"/>
</dbReference>
<dbReference type="Pfam" id="PF02934">
    <property type="entry name" value="GatB_N"/>
    <property type="match status" value="1"/>
</dbReference>
<dbReference type="Pfam" id="PF02637">
    <property type="entry name" value="GatB_Yqey"/>
    <property type="match status" value="1"/>
</dbReference>
<dbReference type="SMART" id="SM00845">
    <property type="entry name" value="GatB_Yqey"/>
    <property type="match status" value="1"/>
</dbReference>
<dbReference type="SUPFAM" id="SSF89095">
    <property type="entry name" value="GatB/YqeY motif"/>
    <property type="match status" value="1"/>
</dbReference>
<dbReference type="SUPFAM" id="SSF55931">
    <property type="entry name" value="Glutamine synthetase/guanido kinase"/>
    <property type="match status" value="1"/>
</dbReference>
<dbReference type="PROSITE" id="PS01234">
    <property type="entry name" value="GATB"/>
    <property type="match status" value="1"/>
</dbReference>
<proteinExistence type="inferred from homology"/>
<evidence type="ECO:0000255" key="1">
    <source>
        <dbReference type="HAMAP-Rule" id="MF_00121"/>
    </source>
</evidence>
<comment type="function">
    <text evidence="1">Allows the formation of correctly charged Asn-tRNA(Asn) or Gln-tRNA(Gln) through the transamidation of misacylated Asp-tRNA(Asn) or Glu-tRNA(Gln) in organisms which lack either or both of asparaginyl-tRNA or glutaminyl-tRNA synthetases. The reaction takes place in the presence of glutamine and ATP through an activated phospho-Asp-tRNA(Asn) or phospho-Glu-tRNA(Gln).</text>
</comment>
<comment type="catalytic activity">
    <reaction evidence="1">
        <text>L-glutamyl-tRNA(Gln) + L-glutamine + ATP + H2O = L-glutaminyl-tRNA(Gln) + L-glutamate + ADP + phosphate + H(+)</text>
        <dbReference type="Rhea" id="RHEA:17521"/>
        <dbReference type="Rhea" id="RHEA-COMP:9681"/>
        <dbReference type="Rhea" id="RHEA-COMP:9684"/>
        <dbReference type="ChEBI" id="CHEBI:15377"/>
        <dbReference type="ChEBI" id="CHEBI:15378"/>
        <dbReference type="ChEBI" id="CHEBI:29985"/>
        <dbReference type="ChEBI" id="CHEBI:30616"/>
        <dbReference type="ChEBI" id="CHEBI:43474"/>
        <dbReference type="ChEBI" id="CHEBI:58359"/>
        <dbReference type="ChEBI" id="CHEBI:78520"/>
        <dbReference type="ChEBI" id="CHEBI:78521"/>
        <dbReference type="ChEBI" id="CHEBI:456216"/>
    </reaction>
</comment>
<comment type="catalytic activity">
    <reaction evidence="1">
        <text>L-aspartyl-tRNA(Asn) + L-glutamine + ATP + H2O = L-asparaginyl-tRNA(Asn) + L-glutamate + ADP + phosphate + 2 H(+)</text>
        <dbReference type="Rhea" id="RHEA:14513"/>
        <dbReference type="Rhea" id="RHEA-COMP:9674"/>
        <dbReference type="Rhea" id="RHEA-COMP:9677"/>
        <dbReference type="ChEBI" id="CHEBI:15377"/>
        <dbReference type="ChEBI" id="CHEBI:15378"/>
        <dbReference type="ChEBI" id="CHEBI:29985"/>
        <dbReference type="ChEBI" id="CHEBI:30616"/>
        <dbReference type="ChEBI" id="CHEBI:43474"/>
        <dbReference type="ChEBI" id="CHEBI:58359"/>
        <dbReference type="ChEBI" id="CHEBI:78515"/>
        <dbReference type="ChEBI" id="CHEBI:78516"/>
        <dbReference type="ChEBI" id="CHEBI:456216"/>
    </reaction>
</comment>
<comment type="subunit">
    <text evidence="1">Heterotrimer of A, B and C subunits.</text>
</comment>
<comment type="similarity">
    <text evidence="1">Belongs to the GatB/GatE family. GatB subfamily.</text>
</comment>
<protein>
    <recommendedName>
        <fullName evidence="1">Aspartyl/glutamyl-tRNA(Asn/Gln) amidotransferase subunit B</fullName>
        <shortName evidence="1">Asp/Glu-ADT subunit B</shortName>
        <ecNumber evidence="1">6.3.5.-</ecNumber>
    </recommendedName>
</protein>
<feature type="chain" id="PRO_1000203062" description="Aspartyl/glutamyl-tRNA(Asn/Gln) amidotransferase subunit B">
    <location>
        <begin position="1"/>
        <end position="476"/>
    </location>
</feature>
<gene>
    <name evidence="1" type="primary">gatB</name>
    <name type="ordered locus">Vapar_0280</name>
</gene>
<reference key="1">
    <citation type="journal article" date="2011" name="J. Bacteriol.">
        <title>Complete genome sequence of the metabolically versatile plant growth-promoting endophyte, Variovorax paradoxus S110.</title>
        <authorList>
            <person name="Han J.I."/>
            <person name="Choi H.K."/>
            <person name="Lee S.W."/>
            <person name="Orwin P.M."/>
            <person name="Kim J."/>
            <person name="Laroe S.L."/>
            <person name="Kim T.G."/>
            <person name="O'Neil J."/>
            <person name="Leadbetter J.R."/>
            <person name="Lee S.Y."/>
            <person name="Hur C.G."/>
            <person name="Spain J.C."/>
            <person name="Ovchinnikova G."/>
            <person name="Goodwin L."/>
            <person name="Han C."/>
        </authorList>
    </citation>
    <scope>NUCLEOTIDE SEQUENCE [LARGE SCALE GENOMIC DNA]</scope>
    <source>
        <strain>S110</strain>
    </source>
</reference>
<accession>C5CY39</accession>
<keyword id="KW-0067">ATP-binding</keyword>
<keyword id="KW-0436">Ligase</keyword>
<keyword id="KW-0547">Nucleotide-binding</keyword>
<keyword id="KW-0648">Protein biosynthesis</keyword>
<name>GATB_VARPS</name>
<organism>
    <name type="scientific">Variovorax paradoxus (strain S110)</name>
    <dbReference type="NCBI Taxonomy" id="543728"/>
    <lineage>
        <taxon>Bacteria</taxon>
        <taxon>Pseudomonadati</taxon>
        <taxon>Pseudomonadota</taxon>
        <taxon>Betaproteobacteria</taxon>
        <taxon>Burkholderiales</taxon>
        <taxon>Comamonadaceae</taxon>
        <taxon>Variovorax</taxon>
    </lineage>
</organism>
<sequence>MRGYEVIIGFETHAQLSTASKIFSRASTAFGAEPNTQACAVDLALPGTLPVMNKGAVERAIKLGLALGSHIAPRSVFARKNYFYPDLPKGYQISQYEIPVVQGGAVSFFLGEEKKTVRLVRAHLEEDAGKSLHENFIGQSGIDLNRAGTPLLEIVTEPDMRSTAEAVAYARELHKIVTWIGICDGNMQEGSFRCDANVSVRKPGEKLGTRREIKNLNSFKFMQQAIDYEINSQINELEDGRKIEQATVLFDPDTGETRTMRTKEDAADYRYFPDPDLPPLAIEAEWIERVRATMPELPRAMAERYVRDHGMSEYDAAQLTQSPALARYFDDAVKAGATPKLASNWITGEMARRLNAQEIGIEAAPVTAQQLAQLVGRIADGTLPNNAARQVFDALWTGEGSDVDAIIEARDLKPMSDTGALDRILDEVIAKNAKNVEEYRGGKEKALNGLVGQVMKASGGKANPAQVTELLKAKLG</sequence>